<gene>
    <name evidence="1" type="primary">astD</name>
    <name type="ordered locus">VS_2859</name>
</gene>
<comment type="function">
    <text evidence="1">Catalyzes the NAD-dependent reduction of succinylglutamate semialdehyde into succinylglutamate.</text>
</comment>
<comment type="catalytic activity">
    <reaction evidence="1">
        <text>N-succinyl-L-glutamate 5-semialdehyde + NAD(+) + H2O = N-succinyl-L-glutamate + NADH + 2 H(+)</text>
        <dbReference type="Rhea" id="RHEA:10812"/>
        <dbReference type="ChEBI" id="CHEBI:15377"/>
        <dbReference type="ChEBI" id="CHEBI:15378"/>
        <dbReference type="ChEBI" id="CHEBI:57540"/>
        <dbReference type="ChEBI" id="CHEBI:57945"/>
        <dbReference type="ChEBI" id="CHEBI:58520"/>
        <dbReference type="ChEBI" id="CHEBI:58763"/>
        <dbReference type="EC" id="1.2.1.71"/>
    </reaction>
</comment>
<comment type="pathway">
    <text evidence="1">Amino-acid degradation; L-arginine degradation via AST pathway; L-glutamate and succinate from L-arginine: step 4/5.</text>
</comment>
<comment type="similarity">
    <text evidence="1">Belongs to the aldehyde dehydrogenase family. AstD subfamily.</text>
</comment>
<keyword id="KW-0056">Arginine metabolism</keyword>
<keyword id="KW-0520">NAD</keyword>
<keyword id="KW-0560">Oxidoreductase</keyword>
<name>ASTD_VIBA3</name>
<reference key="1">
    <citation type="submission" date="2009-02" db="EMBL/GenBank/DDBJ databases">
        <title>Vibrio splendidus str. LGP32 complete genome.</title>
        <authorList>
            <person name="Mazel D."/>
            <person name="Le Roux F."/>
        </authorList>
    </citation>
    <scope>NUCLEOTIDE SEQUENCE [LARGE SCALE GENOMIC DNA]</scope>
    <source>
        <strain>LGP32</strain>
    </source>
</reference>
<proteinExistence type="inferred from homology"/>
<protein>
    <recommendedName>
        <fullName evidence="1">N-succinylglutamate 5-semialdehyde dehydrogenase</fullName>
        <ecNumber evidence="1">1.2.1.71</ecNumber>
    </recommendedName>
    <alternativeName>
        <fullName evidence="1">Succinylglutamic semialdehyde dehydrogenase</fullName>
        <shortName evidence="1">SGSD</shortName>
    </alternativeName>
</protein>
<sequence>MTQWIAGQWVAGQGDAMTSVSPYNNEVVWQGDSATPAQVESAVAAARDAFLVWKKLSFAEREAIVLNFAEKVKENSEEIAQIIAKETGKPIWETRTEAGAMAGKIAISIRAYHERTGEASREAAGNQIVLRHRPLGVMAVFGPYNFPGHLPNGHIVPALLSGNTVVFKPSEQTPWTGEFAMKLWQEAGLPAGVINLVQGAKETGIALADAKGLDGVLFTGSANTGHILHRQFAGQPGKMLALEMGGNNPMVISDQFGDADATVYTIIQSAFISAGQRCTCARRLYVPVGEKGDQLLDKLVAATLKIRVDQPFAEPAPFMGPQISEAAAKFILDAQANLQSLGGVSLVEAKAGEAAFVSPGIIDATNIAELPDEEYFGPLLQVVRYQSLEQAVELANDTRFGLSAGLVSTDDSEWEYFVDHIRAGIVNRNRQLTGASGDAPFGGPGASGNLRPSAYYAADYCAYPMASMEGGETQLPATFSPGIEL</sequence>
<organism>
    <name type="scientific">Vibrio atlanticus (strain LGP32)</name>
    <name type="common">Vibrio splendidus (strain Mel32)</name>
    <dbReference type="NCBI Taxonomy" id="575788"/>
    <lineage>
        <taxon>Bacteria</taxon>
        <taxon>Pseudomonadati</taxon>
        <taxon>Pseudomonadota</taxon>
        <taxon>Gammaproteobacteria</taxon>
        <taxon>Vibrionales</taxon>
        <taxon>Vibrionaceae</taxon>
        <taxon>Vibrio</taxon>
    </lineage>
</organism>
<accession>B7VLI4</accession>
<dbReference type="EC" id="1.2.1.71" evidence="1"/>
<dbReference type="EMBL" id="FM954972">
    <property type="protein sequence ID" value="CAV20152.1"/>
    <property type="molecule type" value="Genomic_DNA"/>
</dbReference>
<dbReference type="SMR" id="B7VLI4"/>
<dbReference type="STRING" id="575788.VS_2859"/>
<dbReference type="KEGG" id="vsp:VS_2859"/>
<dbReference type="eggNOG" id="COG1012">
    <property type="taxonomic scope" value="Bacteria"/>
</dbReference>
<dbReference type="HOGENOM" id="CLU_005391_1_0_6"/>
<dbReference type="UniPathway" id="UPA00185">
    <property type="reaction ID" value="UER00282"/>
</dbReference>
<dbReference type="Proteomes" id="UP000009100">
    <property type="component" value="Chromosome 1"/>
</dbReference>
<dbReference type="GO" id="GO:0043824">
    <property type="term" value="F:succinylglutamate-semialdehyde dehydrogenase activity"/>
    <property type="evidence" value="ECO:0007669"/>
    <property type="project" value="UniProtKB-EC"/>
</dbReference>
<dbReference type="GO" id="GO:0019544">
    <property type="term" value="P:arginine catabolic process to glutamate"/>
    <property type="evidence" value="ECO:0007669"/>
    <property type="project" value="UniProtKB-UniRule"/>
</dbReference>
<dbReference type="GO" id="GO:0019545">
    <property type="term" value="P:arginine catabolic process to succinate"/>
    <property type="evidence" value="ECO:0007669"/>
    <property type="project" value="UniProtKB-UniRule"/>
</dbReference>
<dbReference type="CDD" id="cd07095">
    <property type="entry name" value="ALDH_SGSD_AstD"/>
    <property type="match status" value="1"/>
</dbReference>
<dbReference type="FunFam" id="3.40.605.10:FF:000010">
    <property type="entry name" value="N-succinylglutamate 5-semialdehyde dehydrogenase"/>
    <property type="match status" value="1"/>
</dbReference>
<dbReference type="Gene3D" id="3.40.605.10">
    <property type="entry name" value="Aldehyde Dehydrogenase, Chain A, domain 1"/>
    <property type="match status" value="1"/>
</dbReference>
<dbReference type="Gene3D" id="3.40.309.10">
    <property type="entry name" value="Aldehyde Dehydrogenase, Chain A, domain 2"/>
    <property type="match status" value="1"/>
</dbReference>
<dbReference type="HAMAP" id="MF_01174">
    <property type="entry name" value="Aldedh_AstD"/>
    <property type="match status" value="1"/>
</dbReference>
<dbReference type="InterPro" id="IPR016161">
    <property type="entry name" value="Ald_DH/histidinol_DH"/>
</dbReference>
<dbReference type="InterPro" id="IPR016163">
    <property type="entry name" value="Ald_DH_C"/>
</dbReference>
<dbReference type="InterPro" id="IPR016160">
    <property type="entry name" value="Ald_DH_CS_CYS"/>
</dbReference>
<dbReference type="InterPro" id="IPR029510">
    <property type="entry name" value="Ald_DH_CS_GLU"/>
</dbReference>
<dbReference type="InterPro" id="IPR016162">
    <property type="entry name" value="Ald_DH_N"/>
</dbReference>
<dbReference type="InterPro" id="IPR015590">
    <property type="entry name" value="Aldehyde_DH_dom"/>
</dbReference>
<dbReference type="InterPro" id="IPR017649">
    <property type="entry name" value="SuccinylGlu_semiald_DH_AstD"/>
</dbReference>
<dbReference type="NCBIfam" id="TIGR03240">
    <property type="entry name" value="arg_catab_astD"/>
    <property type="match status" value="1"/>
</dbReference>
<dbReference type="NCBIfam" id="NF006992">
    <property type="entry name" value="PRK09457.1"/>
    <property type="match status" value="1"/>
</dbReference>
<dbReference type="PANTHER" id="PTHR11699">
    <property type="entry name" value="ALDEHYDE DEHYDROGENASE-RELATED"/>
    <property type="match status" value="1"/>
</dbReference>
<dbReference type="Pfam" id="PF00171">
    <property type="entry name" value="Aldedh"/>
    <property type="match status" value="1"/>
</dbReference>
<dbReference type="SUPFAM" id="SSF53720">
    <property type="entry name" value="ALDH-like"/>
    <property type="match status" value="1"/>
</dbReference>
<dbReference type="PROSITE" id="PS00070">
    <property type="entry name" value="ALDEHYDE_DEHYDR_CYS"/>
    <property type="match status" value="1"/>
</dbReference>
<dbReference type="PROSITE" id="PS00687">
    <property type="entry name" value="ALDEHYDE_DEHYDR_GLU"/>
    <property type="match status" value="1"/>
</dbReference>
<evidence type="ECO:0000255" key="1">
    <source>
        <dbReference type="HAMAP-Rule" id="MF_01174"/>
    </source>
</evidence>
<feature type="chain" id="PRO_1000164408" description="N-succinylglutamate 5-semialdehyde dehydrogenase">
    <location>
        <begin position="1"/>
        <end position="485"/>
    </location>
</feature>
<feature type="active site" evidence="1">
    <location>
        <position position="243"/>
    </location>
</feature>
<feature type="active site" evidence="1">
    <location>
        <position position="278"/>
    </location>
</feature>
<feature type="binding site" evidence="1">
    <location>
        <begin position="220"/>
        <end position="225"/>
    </location>
    <ligand>
        <name>NAD(+)</name>
        <dbReference type="ChEBI" id="CHEBI:57540"/>
    </ligand>
</feature>